<keyword id="KW-1185">Reference proteome</keyword>
<keyword id="KW-0949">S-adenosyl-L-methionine</keyword>
<keyword id="KW-0808">Transferase</keyword>
<accession>Q7VLX6</accession>
<organism>
    <name type="scientific">Haemophilus ducreyi (strain 35000HP / ATCC 700724)</name>
    <dbReference type="NCBI Taxonomy" id="233412"/>
    <lineage>
        <taxon>Bacteria</taxon>
        <taxon>Pseudomonadati</taxon>
        <taxon>Pseudomonadota</taxon>
        <taxon>Gammaproteobacteria</taxon>
        <taxon>Pasteurellales</taxon>
        <taxon>Pasteurellaceae</taxon>
        <taxon>Haemophilus</taxon>
    </lineage>
</organism>
<feature type="chain" id="PRO_0000314332" description="Carboxy-S-adenosyl-L-methionine synthase">
    <location>
        <begin position="1"/>
        <end position="244"/>
    </location>
</feature>
<feature type="binding site" evidence="1">
    <location>
        <position position="38"/>
    </location>
    <ligand>
        <name>S-adenosyl-L-methionine</name>
        <dbReference type="ChEBI" id="CHEBI:59789"/>
    </ligand>
</feature>
<feature type="binding site" evidence="1">
    <location>
        <begin position="63"/>
        <end position="65"/>
    </location>
    <ligand>
        <name>S-adenosyl-L-methionine</name>
        <dbReference type="ChEBI" id="CHEBI:59789"/>
    </ligand>
</feature>
<feature type="binding site" evidence="1">
    <location>
        <begin position="88"/>
        <end position="89"/>
    </location>
    <ligand>
        <name>S-adenosyl-L-methionine</name>
        <dbReference type="ChEBI" id="CHEBI:59789"/>
    </ligand>
</feature>
<feature type="binding site" evidence="1">
    <location>
        <begin position="116"/>
        <end position="117"/>
    </location>
    <ligand>
        <name>S-adenosyl-L-methionine</name>
        <dbReference type="ChEBI" id="CHEBI:59789"/>
    </ligand>
</feature>
<feature type="binding site" evidence="1">
    <location>
        <position position="131"/>
    </location>
    <ligand>
        <name>S-adenosyl-L-methionine</name>
        <dbReference type="ChEBI" id="CHEBI:59789"/>
    </ligand>
</feature>
<feature type="binding site" evidence="1">
    <location>
        <position position="198"/>
    </location>
    <ligand>
        <name>S-adenosyl-L-methionine</name>
        <dbReference type="ChEBI" id="CHEBI:59789"/>
    </ligand>
</feature>
<dbReference type="EC" id="2.1.3.-" evidence="1"/>
<dbReference type="EMBL" id="AE017143">
    <property type="protein sequence ID" value="AAP96094.1"/>
    <property type="molecule type" value="Genomic_DNA"/>
</dbReference>
<dbReference type="RefSeq" id="WP_010945143.1">
    <property type="nucleotide sequence ID" value="NC_002940.2"/>
</dbReference>
<dbReference type="SMR" id="Q7VLX6"/>
<dbReference type="STRING" id="233412.HD_1267"/>
<dbReference type="KEGG" id="hdu:HD_1267"/>
<dbReference type="eggNOG" id="COG2226">
    <property type="taxonomic scope" value="Bacteria"/>
</dbReference>
<dbReference type="HOGENOM" id="CLU_078475_0_0_6"/>
<dbReference type="OrthoDB" id="9779941at2"/>
<dbReference type="Proteomes" id="UP000001022">
    <property type="component" value="Chromosome"/>
</dbReference>
<dbReference type="GO" id="GO:0016743">
    <property type="term" value="F:carboxyl- or carbamoyltransferase activity"/>
    <property type="evidence" value="ECO:0007669"/>
    <property type="project" value="UniProtKB-UniRule"/>
</dbReference>
<dbReference type="GO" id="GO:1904047">
    <property type="term" value="F:S-adenosyl-L-methionine binding"/>
    <property type="evidence" value="ECO:0007669"/>
    <property type="project" value="UniProtKB-UniRule"/>
</dbReference>
<dbReference type="GO" id="GO:0002098">
    <property type="term" value="P:tRNA wobble uridine modification"/>
    <property type="evidence" value="ECO:0007669"/>
    <property type="project" value="InterPro"/>
</dbReference>
<dbReference type="CDD" id="cd02440">
    <property type="entry name" value="AdoMet_MTases"/>
    <property type="match status" value="1"/>
</dbReference>
<dbReference type="Gene3D" id="3.40.50.150">
    <property type="entry name" value="Vaccinia Virus protein VP39"/>
    <property type="match status" value="1"/>
</dbReference>
<dbReference type="HAMAP" id="MF_01589">
    <property type="entry name" value="Cx_SAM_synthase"/>
    <property type="match status" value="1"/>
</dbReference>
<dbReference type="InterPro" id="IPR005271">
    <property type="entry name" value="CmoA"/>
</dbReference>
<dbReference type="InterPro" id="IPR041698">
    <property type="entry name" value="Methyltransf_25"/>
</dbReference>
<dbReference type="InterPro" id="IPR029063">
    <property type="entry name" value="SAM-dependent_MTases_sf"/>
</dbReference>
<dbReference type="NCBIfam" id="TIGR00740">
    <property type="entry name" value="carboxy-S-adenosyl-L-methionine synthase CmoA"/>
    <property type="match status" value="1"/>
</dbReference>
<dbReference type="NCBIfam" id="NF011995">
    <property type="entry name" value="PRK15451.1"/>
    <property type="match status" value="1"/>
</dbReference>
<dbReference type="PANTHER" id="PTHR43861:SF2">
    <property type="entry name" value="CARBOXY-S-ADENOSYL-L-METHIONINE SYNTHASE"/>
    <property type="match status" value="1"/>
</dbReference>
<dbReference type="PANTHER" id="PTHR43861">
    <property type="entry name" value="TRANS-ACONITATE 2-METHYLTRANSFERASE-RELATED"/>
    <property type="match status" value="1"/>
</dbReference>
<dbReference type="Pfam" id="PF13649">
    <property type="entry name" value="Methyltransf_25"/>
    <property type="match status" value="1"/>
</dbReference>
<dbReference type="PIRSF" id="PIRSF006325">
    <property type="entry name" value="MeTrfase_bac"/>
    <property type="match status" value="1"/>
</dbReference>
<dbReference type="SUPFAM" id="SSF53335">
    <property type="entry name" value="S-adenosyl-L-methionine-dependent methyltransferases"/>
    <property type="match status" value="1"/>
</dbReference>
<reference key="1">
    <citation type="submission" date="2003-06" db="EMBL/GenBank/DDBJ databases">
        <title>The complete genome sequence of Haemophilus ducreyi.</title>
        <authorList>
            <person name="Munson R.S. Jr."/>
            <person name="Ray W.C."/>
            <person name="Mahairas G."/>
            <person name="Sabo P."/>
            <person name="Mungur R."/>
            <person name="Johnson L."/>
            <person name="Nguyen D."/>
            <person name="Wang J."/>
            <person name="Forst C."/>
            <person name="Hood L."/>
        </authorList>
    </citation>
    <scope>NUCLEOTIDE SEQUENCE [LARGE SCALE GENOMIC DNA]</scope>
    <source>
        <strain>35000HP / ATCC 700724</strain>
    </source>
</reference>
<protein>
    <recommendedName>
        <fullName evidence="1">Carboxy-S-adenosyl-L-methionine synthase</fullName>
        <shortName evidence="1">Cx-SAM synthase</shortName>
        <ecNumber evidence="1">2.1.3.-</ecNumber>
    </recommendedName>
</protein>
<evidence type="ECO:0000255" key="1">
    <source>
        <dbReference type="HAMAP-Rule" id="MF_01589"/>
    </source>
</evidence>
<gene>
    <name evidence="1" type="primary">cmoA</name>
    <name type="ordered locus">HD_1267</name>
</gene>
<sequence>MNRDTIFSTPIEKLGDFTFDESVADVFPDMIQRSIPGYSNIITAIGMLAERFVTEGSNVYDLGCSRGASILAIRRNAPTKNFRIIGVDNSRPMVERCRSHLSAYHSDIPVNIVCDDIRNIEIQNASMVVLNFTLQFLPRTDRIALLTKIYHGLNPNGILILSEKFSFVDNTIDELLVDLHHTFKRANGYSELEVSQKRTALENVMLTDSIQTHKNRLQDAGFSQIELWFQCFNFGSMVAIKQSP</sequence>
<comment type="function">
    <text evidence="1">Catalyzes the conversion of S-adenosyl-L-methionine (SAM) to carboxy-S-adenosyl-L-methionine (Cx-SAM).</text>
</comment>
<comment type="catalytic activity">
    <reaction evidence="1">
        <text>prephenate + S-adenosyl-L-methionine = carboxy-S-adenosyl-L-methionine + 3-phenylpyruvate + H2O</text>
        <dbReference type="Rhea" id="RHEA:51692"/>
        <dbReference type="ChEBI" id="CHEBI:15377"/>
        <dbReference type="ChEBI" id="CHEBI:18005"/>
        <dbReference type="ChEBI" id="CHEBI:29934"/>
        <dbReference type="ChEBI" id="CHEBI:59789"/>
        <dbReference type="ChEBI" id="CHEBI:134278"/>
    </reaction>
</comment>
<comment type="subunit">
    <text evidence="1">Homodimer.</text>
</comment>
<comment type="similarity">
    <text evidence="1">Belongs to the class I-like SAM-binding methyltransferase superfamily. Cx-SAM synthase family.</text>
</comment>
<proteinExistence type="inferred from homology"/>
<name>CMOA_HAEDU</name>